<sequence length="329" mass="37443">MAKSVSISYLALEQIFNDTIGAGEIKVAGLLVGHPVNGGVHIARTIPTSRGTVTYVRISAEEISRAVEELNPGEKIVGWYHSRPGQGVFFSQDDIETHEKCLDFNPYFQALVIDPHQAKYGTPMADCVRFYTVRNHKEVPIHGYKLTGSSMQSYYDPKEFVFDKYGFPHHYTLTHAGKTKISHRKSNMDASFEYDVFICHAHEDKEFFVRELAEKLHSKGLRVWYDEFTLSLGDNLRRSIENGLAKSRYGIVVLSKRFFEKEWPQKELDGLVAKEVEGKKVILPVWHGITREEVQSFSSILANRLAASSEKGIDYVVNEILRVLRKKSV</sequence>
<protein>
    <recommendedName>
        <fullName evidence="5">NAD(+) hydrolase TcpA</fullName>
        <ecNumber evidence="3">3.2.2.6</ecNumber>
    </recommendedName>
    <alternativeName>
        <fullName evidence="4">TIR domain-containing protein in T.archaeon</fullName>
        <shortName evidence="4">tcpA</shortName>
    </alternativeName>
</protein>
<dbReference type="EC" id="3.2.2.6" evidence="3"/>
<dbReference type="EMBL" id="LSSC01000186">
    <property type="protein sequence ID" value="KYK27962.1"/>
    <property type="molecule type" value="Genomic_DNA"/>
</dbReference>
<dbReference type="SMR" id="A0A151EH88"/>
<dbReference type="STRING" id="1803814.AYK19_21110"/>
<dbReference type="Proteomes" id="UP000075539">
    <property type="component" value="Unassembled WGS sequence"/>
</dbReference>
<dbReference type="GO" id="GO:0008237">
    <property type="term" value="F:metallopeptidase activity"/>
    <property type="evidence" value="ECO:0007669"/>
    <property type="project" value="InterPro"/>
</dbReference>
<dbReference type="GO" id="GO:0003953">
    <property type="term" value="F:NAD+ nucleosidase activity"/>
    <property type="evidence" value="ECO:0000314"/>
    <property type="project" value="UniProtKB"/>
</dbReference>
<dbReference type="GO" id="GO:0061809">
    <property type="term" value="F:NAD+ nucleosidase activity, cyclic ADP-ribose generating"/>
    <property type="evidence" value="ECO:0007669"/>
    <property type="project" value="UniProtKB-EC"/>
</dbReference>
<dbReference type="GO" id="GO:0019677">
    <property type="term" value="P:NAD catabolic process"/>
    <property type="evidence" value="ECO:0000314"/>
    <property type="project" value="UniProtKB"/>
</dbReference>
<dbReference type="GO" id="GO:0007165">
    <property type="term" value="P:signal transduction"/>
    <property type="evidence" value="ECO:0007669"/>
    <property type="project" value="InterPro"/>
</dbReference>
<dbReference type="Gene3D" id="3.40.140.10">
    <property type="entry name" value="Cytidine Deaminase, domain 2"/>
    <property type="match status" value="1"/>
</dbReference>
<dbReference type="Gene3D" id="3.40.50.10140">
    <property type="entry name" value="Toll/interleukin-1 receptor homology (TIR) domain"/>
    <property type="match status" value="1"/>
</dbReference>
<dbReference type="InterPro" id="IPR000555">
    <property type="entry name" value="JAMM/MPN+_dom"/>
</dbReference>
<dbReference type="InterPro" id="IPR050242">
    <property type="entry name" value="JAMM_MPN+_peptidase_M67A"/>
</dbReference>
<dbReference type="InterPro" id="IPR037518">
    <property type="entry name" value="MPN"/>
</dbReference>
<dbReference type="InterPro" id="IPR000157">
    <property type="entry name" value="TIR_dom"/>
</dbReference>
<dbReference type="InterPro" id="IPR035897">
    <property type="entry name" value="Toll_tir_struct_dom_sf"/>
</dbReference>
<dbReference type="PANTHER" id="PTHR10410">
    <property type="entry name" value="EUKARYOTIC TRANSLATION INITIATION FACTOR 3 -RELATED"/>
    <property type="match status" value="1"/>
</dbReference>
<dbReference type="Pfam" id="PF01398">
    <property type="entry name" value="JAB"/>
    <property type="match status" value="1"/>
</dbReference>
<dbReference type="Pfam" id="PF13676">
    <property type="entry name" value="TIR_2"/>
    <property type="match status" value="1"/>
</dbReference>
<dbReference type="SMART" id="SM00232">
    <property type="entry name" value="JAB_MPN"/>
    <property type="match status" value="1"/>
</dbReference>
<dbReference type="SMART" id="SM00255">
    <property type="entry name" value="TIR"/>
    <property type="match status" value="1"/>
</dbReference>
<dbReference type="SUPFAM" id="SSF102712">
    <property type="entry name" value="JAB1/MPN domain"/>
    <property type="match status" value="1"/>
</dbReference>
<dbReference type="SUPFAM" id="SSF52200">
    <property type="entry name" value="Toll/Interleukin receptor TIR domain"/>
    <property type="match status" value="1"/>
</dbReference>
<dbReference type="PROSITE" id="PS50249">
    <property type="entry name" value="MPN"/>
    <property type="match status" value="1"/>
</dbReference>
<dbReference type="PROSITE" id="PS50104">
    <property type="entry name" value="TIR"/>
    <property type="match status" value="1"/>
</dbReference>
<proteinExistence type="evidence at protein level"/>
<organism>
    <name type="scientific">Theionarchaea archaeon (strain DG-70-1)</name>
    <dbReference type="NCBI Taxonomy" id="1803814"/>
    <lineage>
        <taxon>Archaea</taxon>
        <taxon>Methanobacteriati</taxon>
        <taxon>Methanobacteriota</taxon>
        <taxon>Theionarchaea</taxon>
    </lineage>
</organism>
<name>TCPA_THEAD</name>
<comment type="function">
    <text evidence="3">NAD(+) hydrolase (NADase) that catalyzes cleavage of NAD(+) into ADP-D-ribose (ADPR) and nicotinamide.</text>
</comment>
<comment type="catalytic activity">
    <reaction evidence="3">
        <text>NAD(+) + H2O = ADP-D-ribose + nicotinamide + H(+)</text>
        <dbReference type="Rhea" id="RHEA:16301"/>
        <dbReference type="ChEBI" id="CHEBI:15377"/>
        <dbReference type="ChEBI" id="CHEBI:15378"/>
        <dbReference type="ChEBI" id="CHEBI:17154"/>
        <dbReference type="ChEBI" id="CHEBI:57540"/>
        <dbReference type="ChEBI" id="CHEBI:57967"/>
        <dbReference type="EC" id="3.2.2.6"/>
    </reaction>
    <physiologicalReaction direction="left-to-right" evidence="3">
        <dbReference type="Rhea" id="RHEA:16302"/>
    </physiologicalReaction>
</comment>
<comment type="domain">
    <text evidence="1">The TIR domain mediates NAD(+) hydrolase (NADase) activity. Self-association of TIR domains is required for NADase activity.</text>
</comment>
<keyword id="KW-0378">Hydrolase</keyword>
<keyword id="KW-0520">NAD</keyword>
<accession>A0A151EH88</accession>
<feature type="chain" id="PRO_0000449142" description="NAD(+) hydrolase TcpA">
    <location>
        <begin position="1"/>
        <end position="329"/>
    </location>
</feature>
<feature type="domain" description="MPN" evidence="2">
    <location>
        <begin position="5"/>
        <end position="134"/>
    </location>
</feature>
<feature type="domain" description="TIR" evidence="1">
    <location>
        <begin position="192"/>
        <end position="324"/>
    </location>
</feature>
<feature type="active site" evidence="1 6">
    <location>
        <position position="267"/>
    </location>
</feature>
<feature type="binding site" evidence="1">
    <location>
        <begin position="201"/>
        <end position="202"/>
    </location>
    <ligand>
        <name>NAD(+)</name>
        <dbReference type="ChEBI" id="CHEBI:57540"/>
    </ligand>
</feature>
<feature type="binding site" evidence="1">
    <location>
        <position position="231"/>
    </location>
    <ligand>
        <name>NAD(+)</name>
        <dbReference type="ChEBI" id="CHEBI:57540"/>
    </ligand>
</feature>
<feature type="mutagenesis site" description="Loss of NAD(+) hydrolase activity." evidence="3">
    <original>E</original>
    <variation>A</variation>
    <location>
        <position position="267"/>
    </location>
</feature>
<gene>
    <name evidence="4" type="primary">tcpA</name>
    <name evidence="7" type="ORF">AYK19_21110</name>
</gene>
<evidence type="ECO:0000255" key="1">
    <source>
        <dbReference type="PROSITE-ProRule" id="PRU00204"/>
    </source>
</evidence>
<evidence type="ECO:0000255" key="2">
    <source>
        <dbReference type="PROSITE-ProRule" id="PRU01182"/>
    </source>
</evidence>
<evidence type="ECO:0000269" key="3">
    <source>
    </source>
</evidence>
<evidence type="ECO:0000303" key="4">
    <source>
    </source>
</evidence>
<evidence type="ECO:0000305" key="5"/>
<evidence type="ECO:0000305" key="6">
    <source>
    </source>
</evidence>
<evidence type="ECO:0000312" key="7">
    <source>
        <dbReference type="EMBL" id="KYK27962.1"/>
    </source>
</evidence>
<reference key="1">
    <citation type="submission" date="2016-02" db="EMBL/GenBank/DDBJ databases">
        <authorList>
            <person name="Baker B.J."/>
            <person name="Lazar C.S."/>
            <person name="Teske A.P."/>
            <person name="Dick G.J."/>
        </authorList>
    </citation>
    <scope>NUCLEOTIDE SEQUENCE [LARGE SCALE GENOMIC DNA]</scope>
</reference>
<reference key="2">
    <citation type="journal article" date="2018" name="Curr. Biol.">
        <title>TIR domain proteins are an ancient family of NAD+-consuming enzymes.</title>
        <authorList>
            <person name="Essuman K."/>
            <person name="Summers D.W."/>
            <person name="Sasaki Y."/>
            <person name="Mao X."/>
            <person name="Yim A.K.Y."/>
            <person name="DiAntonio A."/>
            <person name="Milbrandt J."/>
        </authorList>
    </citation>
    <scope>FUNCTION</scope>
    <scope>CATALYTIC ACTIVITY</scope>
    <scope>MUTAGENESIS OF GLU-267</scope>
    <scope>ACTIVE SITE</scope>
</reference>